<organismHost>
    <name type="scientific">Crataegus</name>
    <name type="common">hawthorn</name>
    <dbReference type="NCBI Taxonomy" id="23159"/>
</organismHost>
<organismHost>
    <name type="scientific">Malus sieboldii</name>
    <dbReference type="NCBI Taxonomy" id="106566"/>
</organismHost>
<organismHost>
    <name type="scientific">Malus sylvestris</name>
    <name type="common">European crab apple</name>
    <dbReference type="NCBI Taxonomy" id="3752"/>
</organismHost>
<organismHost>
    <name type="scientific">Pyrus communis</name>
    <name type="common">Pear</name>
    <name type="synonym">Pyrus domestica</name>
    <dbReference type="NCBI Taxonomy" id="23211"/>
</organismHost>
<accession>Q64964</accession>
<protein>
    <recommendedName>
        <fullName>Movement protein TGB2</fullName>
    </recommendedName>
    <alternativeName>
        <fullName>Triple gene block 2 protein</fullName>
        <shortName>TGBp2</shortName>
    </alternativeName>
</protein>
<name>TGB2_ASPVP</name>
<evidence type="ECO:0000250" key="1"/>
<evidence type="ECO:0000255" key="2"/>
<evidence type="ECO:0000305" key="3"/>
<keyword id="KW-1038">Host endoplasmic reticulum</keyword>
<keyword id="KW-1043">Host membrane</keyword>
<keyword id="KW-0472">Membrane</keyword>
<keyword id="KW-1185">Reference proteome</keyword>
<keyword id="KW-0812">Transmembrane</keyword>
<keyword id="KW-1133">Transmembrane helix</keyword>
<keyword id="KW-0813">Transport</keyword>
<keyword id="KW-0916">Viral movement protein</keyword>
<sequence length="120" mass="12847">MPFAQPPDYSKSVFPIAVGIAVAVVLFTLTRSTLPQVGDNIHNLPHGGNYQDGTKRISYCGPRDSFPSSSLISSGTPMIIGIIIFLIFAIYVSEKWSRSGSRRCSCCVPGAPACTATVHE</sequence>
<gene>
    <name type="ORF">ORF3</name>
</gene>
<reference key="1">
    <citation type="journal article" date="1994" name="J. Gen. Virol.">
        <title>Nucleotide sequences of apple stem pitting virus and of the coat protein gene of a similar virus from pear associated with vein yellows disease and their relationship with potex- and carlaviruses.</title>
        <authorList>
            <person name="Jelkmann W."/>
        </authorList>
    </citation>
    <scope>NUCLEOTIDE SEQUENCE [GENOMIC RNA]</scope>
</reference>
<organism>
    <name type="scientific">Apple stem pitting virus (isolate PA66)</name>
    <name type="common">ASPV</name>
    <dbReference type="NCBI Taxonomy" id="651356"/>
    <lineage>
        <taxon>Viruses</taxon>
        <taxon>Riboviria</taxon>
        <taxon>Orthornavirae</taxon>
        <taxon>Kitrinoviricota</taxon>
        <taxon>Alsuviricetes</taxon>
        <taxon>Tymovirales</taxon>
        <taxon>Betaflexiviridae</taxon>
        <taxon>Quinvirinae</taxon>
        <taxon>Foveavirus</taxon>
        <taxon>Foveavirus mali</taxon>
    </lineage>
</organism>
<proteinExistence type="inferred from homology"/>
<feature type="chain" id="PRO_0000401091" description="Movement protein TGB2">
    <location>
        <begin position="1"/>
        <end position="120"/>
    </location>
</feature>
<feature type="topological domain" description="Cytoplasmic" evidence="1">
    <location>
        <begin position="1"/>
        <end position="8"/>
    </location>
</feature>
<feature type="transmembrane region" description="Helical" evidence="2">
    <location>
        <begin position="9"/>
        <end position="29"/>
    </location>
</feature>
<feature type="topological domain" description="Lumenal" evidence="1">
    <location>
        <begin position="30"/>
        <end position="71"/>
    </location>
</feature>
<feature type="transmembrane region" description="Helical" evidence="2">
    <location>
        <begin position="72"/>
        <end position="92"/>
    </location>
</feature>
<feature type="topological domain" description="Cytoplasmic" evidence="1">
    <location>
        <begin position="93"/>
        <end position="120"/>
    </location>
</feature>
<dbReference type="EMBL" id="D21829">
    <property type="protein sequence ID" value="BAA04855.1"/>
    <property type="molecule type" value="Genomic_RNA"/>
</dbReference>
<dbReference type="RefSeq" id="NP_604466.1">
    <property type="nucleotide sequence ID" value="NC_003462.2"/>
</dbReference>
<dbReference type="SMR" id="Q64964"/>
<dbReference type="KEGG" id="vg:935271"/>
<dbReference type="Proteomes" id="UP000000678">
    <property type="component" value="Segment"/>
</dbReference>
<dbReference type="GO" id="GO:0044167">
    <property type="term" value="C:host cell endoplasmic reticulum membrane"/>
    <property type="evidence" value="ECO:0007669"/>
    <property type="project" value="UniProtKB-SubCell"/>
</dbReference>
<dbReference type="GO" id="GO:0016020">
    <property type="term" value="C:membrane"/>
    <property type="evidence" value="ECO:0007669"/>
    <property type="project" value="UniProtKB-KW"/>
</dbReference>
<dbReference type="GO" id="GO:0046740">
    <property type="term" value="P:transport of virus in host, cell to cell"/>
    <property type="evidence" value="ECO:0007669"/>
    <property type="project" value="UniProtKB-KW"/>
</dbReference>
<dbReference type="InterPro" id="IPR001896">
    <property type="entry name" value="Plant_vir_prot"/>
</dbReference>
<dbReference type="Pfam" id="PF01307">
    <property type="entry name" value="Plant_vir_prot"/>
    <property type="match status" value="1"/>
</dbReference>
<comment type="function">
    <text evidence="1">Plays a role in viral cell-to-cell propagation, by facilitating genome transport to neighboring plant cells through plasmosdesmata,.</text>
</comment>
<comment type="subcellular location">
    <subcellularLocation>
        <location evidence="1">Host endoplasmic reticulum membrane</location>
    </subcellularLocation>
</comment>
<comment type="miscellaneous">
    <text>TGBp1, TGBp2 and TGBp3 seem to act together for cell-to-cell propagation. TGBp1 is the main movement protein that physically cross the plasmodesma with the viral genome. TGBp2 and TGBp3 would facilitate TGBp1 function.</text>
</comment>
<comment type="similarity">
    <text evidence="3">Belongs to the Tymovirales TGBp2 protein family.</text>
</comment>